<dbReference type="EMBL" id="BX571856">
    <property type="protein sequence ID" value="CAG41098.1"/>
    <property type="molecule type" value="Genomic_DNA"/>
</dbReference>
<dbReference type="RefSeq" id="WP_000917289.1">
    <property type="nucleotide sequence ID" value="NC_002952.2"/>
</dbReference>
<dbReference type="SMR" id="Q6GF42"/>
<dbReference type="GeneID" id="98346332"/>
<dbReference type="KEGG" id="sar:SAR2117"/>
<dbReference type="HOGENOM" id="CLU_132825_2_1_9"/>
<dbReference type="Proteomes" id="UP000000596">
    <property type="component" value="Chromosome"/>
</dbReference>
<dbReference type="GO" id="GO:0005737">
    <property type="term" value="C:cytoplasm"/>
    <property type="evidence" value="ECO:0007669"/>
    <property type="project" value="UniProtKB-SubCell"/>
</dbReference>
<dbReference type="GO" id="GO:0005524">
    <property type="term" value="F:ATP binding"/>
    <property type="evidence" value="ECO:0007669"/>
    <property type="project" value="InterPro"/>
</dbReference>
<dbReference type="GO" id="GO:0046872">
    <property type="term" value="F:metal ion binding"/>
    <property type="evidence" value="ECO:0007669"/>
    <property type="project" value="TreeGrafter"/>
</dbReference>
<dbReference type="GO" id="GO:0044183">
    <property type="term" value="F:protein folding chaperone"/>
    <property type="evidence" value="ECO:0007669"/>
    <property type="project" value="InterPro"/>
</dbReference>
<dbReference type="GO" id="GO:0051087">
    <property type="term" value="F:protein-folding chaperone binding"/>
    <property type="evidence" value="ECO:0007669"/>
    <property type="project" value="TreeGrafter"/>
</dbReference>
<dbReference type="GO" id="GO:0051082">
    <property type="term" value="F:unfolded protein binding"/>
    <property type="evidence" value="ECO:0007669"/>
    <property type="project" value="TreeGrafter"/>
</dbReference>
<dbReference type="GO" id="GO:0051085">
    <property type="term" value="P:chaperone cofactor-dependent protein refolding"/>
    <property type="evidence" value="ECO:0007669"/>
    <property type="project" value="TreeGrafter"/>
</dbReference>
<dbReference type="CDD" id="cd00320">
    <property type="entry name" value="cpn10"/>
    <property type="match status" value="1"/>
</dbReference>
<dbReference type="FunFam" id="2.30.33.40:FF:000001">
    <property type="entry name" value="10 kDa chaperonin"/>
    <property type="match status" value="1"/>
</dbReference>
<dbReference type="Gene3D" id="2.30.33.40">
    <property type="entry name" value="GroES chaperonin"/>
    <property type="match status" value="1"/>
</dbReference>
<dbReference type="HAMAP" id="MF_00580">
    <property type="entry name" value="CH10"/>
    <property type="match status" value="1"/>
</dbReference>
<dbReference type="InterPro" id="IPR020818">
    <property type="entry name" value="Chaperonin_GroES"/>
</dbReference>
<dbReference type="InterPro" id="IPR037124">
    <property type="entry name" value="Chaperonin_GroES_sf"/>
</dbReference>
<dbReference type="InterPro" id="IPR018369">
    <property type="entry name" value="Chaprnonin_Cpn10_CS"/>
</dbReference>
<dbReference type="InterPro" id="IPR011032">
    <property type="entry name" value="GroES-like_sf"/>
</dbReference>
<dbReference type="NCBIfam" id="NF001531">
    <property type="entry name" value="PRK00364.2-2"/>
    <property type="match status" value="1"/>
</dbReference>
<dbReference type="NCBIfam" id="NF001532">
    <property type="entry name" value="PRK00364.2-3"/>
    <property type="match status" value="1"/>
</dbReference>
<dbReference type="NCBIfam" id="NF001533">
    <property type="entry name" value="PRK00364.2-4"/>
    <property type="match status" value="1"/>
</dbReference>
<dbReference type="NCBIfam" id="NF001534">
    <property type="entry name" value="PRK00364.2-5"/>
    <property type="match status" value="1"/>
</dbReference>
<dbReference type="PANTHER" id="PTHR10772">
    <property type="entry name" value="10 KDA HEAT SHOCK PROTEIN"/>
    <property type="match status" value="1"/>
</dbReference>
<dbReference type="PANTHER" id="PTHR10772:SF58">
    <property type="entry name" value="CO-CHAPERONIN GROES"/>
    <property type="match status" value="1"/>
</dbReference>
<dbReference type="Pfam" id="PF00166">
    <property type="entry name" value="Cpn10"/>
    <property type="match status" value="1"/>
</dbReference>
<dbReference type="PRINTS" id="PR00297">
    <property type="entry name" value="CHAPERONIN10"/>
</dbReference>
<dbReference type="SMART" id="SM00883">
    <property type="entry name" value="Cpn10"/>
    <property type="match status" value="1"/>
</dbReference>
<dbReference type="SUPFAM" id="SSF50129">
    <property type="entry name" value="GroES-like"/>
    <property type="match status" value="1"/>
</dbReference>
<dbReference type="PROSITE" id="PS00681">
    <property type="entry name" value="CHAPERONINS_CPN10"/>
    <property type="match status" value="1"/>
</dbReference>
<protein>
    <recommendedName>
        <fullName evidence="1">Co-chaperonin GroES</fullName>
    </recommendedName>
    <alternativeName>
        <fullName evidence="1">10 kDa chaperonin</fullName>
    </alternativeName>
    <alternativeName>
        <fullName evidence="1">Chaperonin-10</fullName>
        <shortName evidence="1">Cpn10</shortName>
    </alternativeName>
    <alternativeName>
        <fullName>Heat shock protein 10</fullName>
    </alternativeName>
</protein>
<sequence length="94" mass="10416">MLKPIGNRVIIEKKEQEQTTKSGIVLTDSAKEKSNEGVIVAVGTGRLLNDGTRVTPEVKEGDRVVFQQYAGTEVKRDNETYLVLNEEDILAVIE</sequence>
<gene>
    <name evidence="1" type="primary">groES</name>
    <name evidence="1" type="synonym">groS</name>
    <name type="synonym">hsp10</name>
    <name type="ordered locus">SAR2117</name>
</gene>
<feature type="chain" id="PRO_0000174842" description="Co-chaperonin GroES">
    <location>
        <begin position="1"/>
        <end position="94"/>
    </location>
</feature>
<reference key="1">
    <citation type="journal article" date="2004" name="Proc. Natl. Acad. Sci. U.S.A.">
        <title>Complete genomes of two clinical Staphylococcus aureus strains: evidence for the rapid evolution of virulence and drug resistance.</title>
        <authorList>
            <person name="Holden M.T.G."/>
            <person name="Feil E.J."/>
            <person name="Lindsay J.A."/>
            <person name="Peacock S.J."/>
            <person name="Day N.P.J."/>
            <person name="Enright M.C."/>
            <person name="Foster T.J."/>
            <person name="Moore C.E."/>
            <person name="Hurst L."/>
            <person name="Atkin R."/>
            <person name="Barron A."/>
            <person name="Bason N."/>
            <person name="Bentley S.D."/>
            <person name="Chillingworth C."/>
            <person name="Chillingworth T."/>
            <person name="Churcher C."/>
            <person name="Clark L."/>
            <person name="Corton C."/>
            <person name="Cronin A."/>
            <person name="Doggett J."/>
            <person name="Dowd L."/>
            <person name="Feltwell T."/>
            <person name="Hance Z."/>
            <person name="Harris B."/>
            <person name="Hauser H."/>
            <person name="Holroyd S."/>
            <person name="Jagels K."/>
            <person name="James K.D."/>
            <person name="Lennard N."/>
            <person name="Line A."/>
            <person name="Mayes R."/>
            <person name="Moule S."/>
            <person name="Mungall K."/>
            <person name="Ormond D."/>
            <person name="Quail M.A."/>
            <person name="Rabbinowitsch E."/>
            <person name="Rutherford K.M."/>
            <person name="Sanders M."/>
            <person name="Sharp S."/>
            <person name="Simmonds M."/>
            <person name="Stevens K."/>
            <person name="Whitehead S."/>
            <person name="Barrell B.G."/>
            <person name="Spratt B.G."/>
            <person name="Parkhill J."/>
        </authorList>
    </citation>
    <scope>NUCLEOTIDE SEQUENCE [LARGE SCALE GENOMIC DNA]</scope>
    <source>
        <strain>MRSA252</strain>
    </source>
</reference>
<comment type="function">
    <text evidence="1">Together with the chaperonin GroEL, plays an essential role in assisting protein folding. The GroEL-GroES system forms a nano-cage that allows encapsulation of the non-native substrate proteins and provides a physical environment optimized to promote and accelerate protein folding. GroES binds to the apical surface of the GroEL ring, thereby capping the opening of the GroEL channel.</text>
</comment>
<comment type="subunit">
    <text evidence="1">Heptamer of 7 subunits arranged in a ring. Interacts with the chaperonin GroEL.</text>
</comment>
<comment type="subcellular location">
    <subcellularLocation>
        <location evidence="1">Cytoplasm</location>
    </subcellularLocation>
</comment>
<comment type="similarity">
    <text evidence="1 2">Belongs to the GroES chaperonin family.</text>
</comment>
<name>CH10_STAAR</name>
<keyword id="KW-0143">Chaperone</keyword>
<keyword id="KW-0963">Cytoplasm</keyword>
<accession>Q6GF42</accession>
<evidence type="ECO:0000255" key="1">
    <source>
        <dbReference type="HAMAP-Rule" id="MF_00580"/>
    </source>
</evidence>
<evidence type="ECO:0000305" key="2"/>
<proteinExistence type="inferred from homology"/>
<organism>
    <name type="scientific">Staphylococcus aureus (strain MRSA252)</name>
    <dbReference type="NCBI Taxonomy" id="282458"/>
    <lineage>
        <taxon>Bacteria</taxon>
        <taxon>Bacillati</taxon>
        <taxon>Bacillota</taxon>
        <taxon>Bacilli</taxon>
        <taxon>Bacillales</taxon>
        <taxon>Staphylococcaceae</taxon>
        <taxon>Staphylococcus</taxon>
    </lineage>
</organism>